<gene>
    <name evidence="1" type="primary">pdxT</name>
    <name type="ordered locus">PPA0966</name>
</gene>
<organism>
    <name type="scientific">Cutibacterium acnes (strain DSM 16379 / KPA171202)</name>
    <name type="common">Propionibacterium acnes</name>
    <dbReference type="NCBI Taxonomy" id="267747"/>
    <lineage>
        <taxon>Bacteria</taxon>
        <taxon>Bacillati</taxon>
        <taxon>Actinomycetota</taxon>
        <taxon>Actinomycetes</taxon>
        <taxon>Propionibacteriales</taxon>
        <taxon>Propionibacteriaceae</taxon>
        <taxon>Cutibacterium</taxon>
    </lineage>
</organism>
<protein>
    <recommendedName>
        <fullName evidence="1">Pyridoxal 5'-phosphate synthase subunit PdxT</fullName>
        <ecNumber evidence="1">4.3.3.6</ecNumber>
    </recommendedName>
    <alternativeName>
        <fullName evidence="1">Pdx2</fullName>
    </alternativeName>
    <alternativeName>
        <fullName evidence="1">Pyridoxal 5'-phosphate synthase glutaminase subunit</fullName>
        <ecNumber evidence="1">3.5.1.2</ecNumber>
    </alternativeName>
</protein>
<comment type="function">
    <text evidence="1">Catalyzes the hydrolysis of glutamine to glutamate and ammonia as part of the biosynthesis of pyridoxal 5'-phosphate. The resulting ammonia molecule is channeled to the active site of PdxS.</text>
</comment>
<comment type="catalytic activity">
    <reaction evidence="1">
        <text>aldehydo-D-ribose 5-phosphate + D-glyceraldehyde 3-phosphate + L-glutamine = pyridoxal 5'-phosphate + L-glutamate + phosphate + 3 H2O + H(+)</text>
        <dbReference type="Rhea" id="RHEA:31507"/>
        <dbReference type="ChEBI" id="CHEBI:15377"/>
        <dbReference type="ChEBI" id="CHEBI:15378"/>
        <dbReference type="ChEBI" id="CHEBI:29985"/>
        <dbReference type="ChEBI" id="CHEBI:43474"/>
        <dbReference type="ChEBI" id="CHEBI:58273"/>
        <dbReference type="ChEBI" id="CHEBI:58359"/>
        <dbReference type="ChEBI" id="CHEBI:59776"/>
        <dbReference type="ChEBI" id="CHEBI:597326"/>
        <dbReference type="EC" id="4.3.3.6"/>
    </reaction>
</comment>
<comment type="catalytic activity">
    <reaction evidence="1">
        <text>L-glutamine + H2O = L-glutamate + NH4(+)</text>
        <dbReference type="Rhea" id="RHEA:15889"/>
        <dbReference type="ChEBI" id="CHEBI:15377"/>
        <dbReference type="ChEBI" id="CHEBI:28938"/>
        <dbReference type="ChEBI" id="CHEBI:29985"/>
        <dbReference type="ChEBI" id="CHEBI:58359"/>
        <dbReference type="EC" id="3.5.1.2"/>
    </reaction>
</comment>
<comment type="pathway">
    <text evidence="1">Cofactor biosynthesis; pyridoxal 5'-phosphate biosynthesis.</text>
</comment>
<comment type="subunit">
    <text evidence="1">In the presence of PdxS, forms a dodecamer of heterodimers. Only shows activity in the heterodimer.</text>
</comment>
<comment type="similarity">
    <text evidence="1">Belongs to the glutaminase PdxT/SNO family.</text>
</comment>
<proteinExistence type="inferred from homology"/>
<accession>Q6A947</accession>
<feature type="chain" id="PRO_0000135654" description="Pyridoxal 5'-phosphate synthase subunit PdxT">
    <location>
        <begin position="1"/>
        <end position="201"/>
    </location>
</feature>
<feature type="active site" description="Nucleophile" evidence="1">
    <location>
        <position position="80"/>
    </location>
</feature>
<feature type="active site" description="Charge relay system" evidence="1">
    <location>
        <position position="180"/>
    </location>
</feature>
<feature type="active site" description="Charge relay system" evidence="1">
    <location>
        <position position="182"/>
    </location>
</feature>
<feature type="binding site" evidence="1">
    <location>
        <begin position="48"/>
        <end position="50"/>
    </location>
    <ligand>
        <name>L-glutamine</name>
        <dbReference type="ChEBI" id="CHEBI:58359"/>
    </ligand>
</feature>
<feature type="binding site" evidence="1">
    <location>
        <position position="109"/>
    </location>
    <ligand>
        <name>L-glutamine</name>
        <dbReference type="ChEBI" id="CHEBI:58359"/>
    </ligand>
</feature>
<feature type="binding site" evidence="1">
    <location>
        <begin position="137"/>
        <end position="138"/>
    </location>
    <ligand>
        <name>L-glutamine</name>
        <dbReference type="ChEBI" id="CHEBI:58359"/>
    </ligand>
</feature>
<name>PDXT_CUTAK</name>
<sequence length="201" mass="21324">MAPLVGVVALQGGFAEHIEVLESLGANTRRVRRSADLQGLDGIVLPGGESTVIDKLMRSFSLAEPLKDAVRRGLPVLATCAGLVVLATDLEDAAKGQHTLSLLDVTVRRNAFGSQLDSFEGTLDIDGVGDGVSATFIRAPVITRVGPGVEVIAQLPDEAGNVSGAIVGVRQRNVLALSFHPEETDDDRVHRTWLRQVSEEV</sequence>
<keyword id="KW-0315">Glutamine amidotransferase</keyword>
<keyword id="KW-0378">Hydrolase</keyword>
<keyword id="KW-0456">Lyase</keyword>
<keyword id="KW-0663">Pyridoxal phosphate</keyword>
<evidence type="ECO:0000255" key="1">
    <source>
        <dbReference type="HAMAP-Rule" id="MF_01615"/>
    </source>
</evidence>
<reference key="1">
    <citation type="journal article" date="2004" name="Science">
        <title>The complete genome sequence of Propionibacterium acnes, a commensal of human skin.</title>
        <authorList>
            <person name="Brueggemann H."/>
            <person name="Henne A."/>
            <person name="Hoster F."/>
            <person name="Liesegang H."/>
            <person name="Wiezer A."/>
            <person name="Strittmatter A."/>
            <person name="Hujer S."/>
            <person name="Duerre P."/>
            <person name="Gottschalk G."/>
        </authorList>
    </citation>
    <scope>NUCLEOTIDE SEQUENCE [LARGE SCALE GENOMIC DNA]</scope>
    <source>
        <strain>DSM 16379 / KPA171202</strain>
    </source>
</reference>
<dbReference type="EC" id="4.3.3.6" evidence="1"/>
<dbReference type="EC" id="3.5.1.2" evidence="1"/>
<dbReference type="EMBL" id="AE017283">
    <property type="protein sequence ID" value="AAT82719.1"/>
    <property type="molecule type" value="Genomic_DNA"/>
</dbReference>
<dbReference type="SMR" id="Q6A947"/>
<dbReference type="EnsemblBacteria" id="AAT82719">
    <property type="protein sequence ID" value="AAT82719"/>
    <property type="gene ID" value="PPA0966"/>
</dbReference>
<dbReference type="KEGG" id="pac:PPA0966"/>
<dbReference type="eggNOG" id="COG0311">
    <property type="taxonomic scope" value="Bacteria"/>
</dbReference>
<dbReference type="HOGENOM" id="CLU_069674_2_0_11"/>
<dbReference type="UniPathway" id="UPA00245"/>
<dbReference type="Proteomes" id="UP000000603">
    <property type="component" value="Chromosome"/>
</dbReference>
<dbReference type="GO" id="GO:0005829">
    <property type="term" value="C:cytosol"/>
    <property type="evidence" value="ECO:0007669"/>
    <property type="project" value="TreeGrafter"/>
</dbReference>
<dbReference type="GO" id="GO:1903600">
    <property type="term" value="C:glutaminase complex"/>
    <property type="evidence" value="ECO:0007669"/>
    <property type="project" value="TreeGrafter"/>
</dbReference>
<dbReference type="GO" id="GO:0004359">
    <property type="term" value="F:glutaminase activity"/>
    <property type="evidence" value="ECO:0007669"/>
    <property type="project" value="UniProtKB-UniRule"/>
</dbReference>
<dbReference type="GO" id="GO:0036381">
    <property type="term" value="F:pyridoxal 5'-phosphate synthase (glutamine hydrolysing) activity"/>
    <property type="evidence" value="ECO:0007669"/>
    <property type="project" value="UniProtKB-UniRule"/>
</dbReference>
<dbReference type="GO" id="GO:0006543">
    <property type="term" value="P:glutamine catabolic process"/>
    <property type="evidence" value="ECO:0007669"/>
    <property type="project" value="UniProtKB-UniRule"/>
</dbReference>
<dbReference type="GO" id="GO:0042823">
    <property type="term" value="P:pyridoxal phosphate biosynthetic process"/>
    <property type="evidence" value="ECO:0007669"/>
    <property type="project" value="UniProtKB-UniRule"/>
</dbReference>
<dbReference type="GO" id="GO:0008614">
    <property type="term" value="P:pyridoxine metabolic process"/>
    <property type="evidence" value="ECO:0007669"/>
    <property type="project" value="TreeGrafter"/>
</dbReference>
<dbReference type="CDD" id="cd01749">
    <property type="entry name" value="GATase1_PB"/>
    <property type="match status" value="1"/>
</dbReference>
<dbReference type="FunFam" id="3.40.50.880:FF:000010">
    <property type="entry name" value="uncharacterized protein LOC100176842 isoform X2"/>
    <property type="match status" value="1"/>
</dbReference>
<dbReference type="Gene3D" id="3.40.50.880">
    <property type="match status" value="1"/>
</dbReference>
<dbReference type="HAMAP" id="MF_01615">
    <property type="entry name" value="PdxT"/>
    <property type="match status" value="1"/>
</dbReference>
<dbReference type="InterPro" id="IPR029062">
    <property type="entry name" value="Class_I_gatase-like"/>
</dbReference>
<dbReference type="InterPro" id="IPR002161">
    <property type="entry name" value="PdxT/SNO"/>
</dbReference>
<dbReference type="InterPro" id="IPR021196">
    <property type="entry name" value="PdxT/SNO_CS"/>
</dbReference>
<dbReference type="NCBIfam" id="TIGR03800">
    <property type="entry name" value="PLP_synth_Pdx2"/>
    <property type="match status" value="1"/>
</dbReference>
<dbReference type="PANTHER" id="PTHR31559">
    <property type="entry name" value="PYRIDOXAL 5'-PHOSPHATE SYNTHASE SUBUNIT SNO"/>
    <property type="match status" value="1"/>
</dbReference>
<dbReference type="PANTHER" id="PTHR31559:SF0">
    <property type="entry name" value="PYRIDOXAL 5'-PHOSPHATE SYNTHASE SUBUNIT SNO1-RELATED"/>
    <property type="match status" value="1"/>
</dbReference>
<dbReference type="Pfam" id="PF01174">
    <property type="entry name" value="SNO"/>
    <property type="match status" value="1"/>
</dbReference>
<dbReference type="PIRSF" id="PIRSF005639">
    <property type="entry name" value="Glut_amidoT_SNO"/>
    <property type="match status" value="1"/>
</dbReference>
<dbReference type="SUPFAM" id="SSF52317">
    <property type="entry name" value="Class I glutamine amidotransferase-like"/>
    <property type="match status" value="1"/>
</dbReference>
<dbReference type="PROSITE" id="PS01236">
    <property type="entry name" value="PDXT_SNO_1"/>
    <property type="match status" value="1"/>
</dbReference>
<dbReference type="PROSITE" id="PS51130">
    <property type="entry name" value="PDXT_SNO_2"/>
    <property type="match status" value="1"/>
</dbReference>